<sequence length="225" mass="24266">MKHVAPPPTTEAVFGDRLPLAQRYAEFLATAGVERGLIGPRETDRIWDRHILNSAALGELVESGDRIADIGSGAGLPGIPLALARPDVHVTLIEPMQRRCEFLTEVVDALGVAVIVVRGRAEDPAVRREVGEMDVVTSRAVGSLDKLATWSMGILRESGRMLALKGARAEAEIEENRRVLARAGAVDVRVLRCGADYLNPPATVVEARRATPSNGRGRPGRSSRR</sequence>
<proteinExistence type="inferred from homology"/>
<organism>
    <name type="scientific">Mycobacterium sp. (strain JLS)</name>
    <dbReference type="NCBI Taxonomy" id="164757"/>
    <lineage>
        <taxon>Bacteria</taxon>
        <taxon>Bacillati</taxon>
        <taxon>Actinomycetota</taxon>
        <taxon>Actinomycetes</taxon>
        <taxon>Mycobacteriales</taxon>
        <taxon>Mycobacteriaceae</taxon>
        <taxon>Mycobacterium</taxon>
    </lineage>
</organism>
<name>RSMG_MYCSJ</name>
<feature type="chain" id="PRO_0000335377" description="Ribosomal RNA small subunit methyltransferase G">
    <location>
        <begin position="1"/>
        <end position="225"/>
    </location>
</feature>
<feature type="region of interest" description="Disordered" evidence="2">
    <location>
        <begin position="204"/>
        <end position="225"/>
    </location>
</feature>
<feature type="binding site" evidence="1">
    <location>
        <position position="71"/>
    </location>
    <ligand>
        <name>S-adenosyl-L-methionine</name>
        <dbReference type="ChEBI" id="CHEBI:59789"/>
    </ligand>
</feature>
<feature type="binding site" evidence="1">
    <location>
        <position position="76"/>
    </location>
    <ligand>
        <name>S-adenosyl-L-methionine</name>
        <dbReference type="ChEBI" id="CHEBI:59789"/>
    </ligand>
</feature>
<feature type="binding site" evidence="1">
    <location>
        <begin position="121"/>
        <end position="122"/>
    </location>
    <ligand>
        <name>S-adenosyl-L-methionine</name>
        <dbReference type="ChEBI" id="CHEBI:59789"/>
    </ligand>
</feature>
<feature type="binding site" evidence="1">
    <location>
        <position position="139"/>
    </location>
    <ligand>
        <name>S-adenosyl-L-methionine</name>
        <dbReference type="ChEBI" id="CHEBI:59789"/>
    </ligand>
</feature>
<evidence type="ECO:0000255" key="1">
    <source>
        <dbReference type="HAMAP-Rule" id="MF_00074"/>
    </source>
</evidence>
<evidence type="ECO:0000256" key="2">
    <source>
        <dbReference type="SAM" id="MobiDB-lite"/>
    </source>
</evidence>
<dbReference type="EC" id="2.1.1.-" evidence="1"/>
<dbReference type="EMBL" id="CP000580">
    <property type="protein sequence ID" value="ABO01548.1"/>
    <property type="molecule type" value="Genomic_DNA"/>
</dbReference>
<dbReference type="SMR" id="A3Q8S0"/>
<dbReference type="KEGG" id="mjl:Mjls_5784"/>
<dbReference type="HOGENOM" id="CLU_065341_5_0_11"/>
<dbReference type="BioCyc" id="MSP164757:G1G8C-5846-MONOMER"/>
<dbReference type="GO" id="GO:0005829">
    <property type="term" value="C:cytosol"/>
    <property type="evidence" value="ECO:0007669"/>
    <property type="project" value="TreeGrafter"/>
</dbReference>
<dbReference type="GO" id="GO:0070043">
    <property type="term" value="F:rRNA (guanine-N7-)-methyltransferase activity"/>
    <property type="evidence" value="ECO:0007669"/>
    <property type="project" value="UniProtKB-UniRule"/>
</dbReference>
<dbReference type="CDD" id="cd02440">
    <property type="entry name" value="AdoMet_MTases"/>
    <property type="match status" value="1"/>
</dbReference>
<dbReference type="Gene3D" id="3.40.50.150">
    <property type="entry name" value="Vaccinia Virus protein VP39"/>
    <property type="match status" value="1"/>
</dbReference>
<dbReference type="HAMAP" id="MF_00074">
    <property type="entry name" value="16SrRNA_methyltr_G"/>
    <property type="match status" value="1"/>
</dbReference>
<dbReference type="InterPro" id="IPR003682">
    <property type="entry name" value="rRNA_ssu_MeTfrase_G"/>
</dbReference>
<dbReference type="InterPro" id="IPR029063">
    <property type="entry name" value="SAM-dependent_MTases_sf"/>
</dbReference>
<dbReference type="NCBIfam" id="TIGR00138">
    <property type="entry name" value="rsmG_gidB"/>
    <property type="match status" value="1"/>
</dbReference>
<dbReference type="PANTHER" id="PTHR31760">
    <property type="entry name" value="S-ADENOSYL-L-METHIONINE-DEPENDENT METHYLTRANSFERASES SUPERFAMILY PROTEIN"/>
    <property type="match status" value="1"/>
</dbReference>
<dbReference type="PANTHER" id="PTHR31760:SF0">
    <property type="entry name" value="S-ADENOSYL-L-METHIONINE-DEPENDENT METHYLTRANSFERASES SUPERFAMILY PROTEIN"/>
    <property type="match status" value="1"/>
</dbReference>
<dbReference type="Pfam" id="PF02527">
    <property type="entry name" value="GidB"/>
    <property type="match status" value="1"/>
</dbReference>
<dbReference type="PIRSF" id="PIRSF003078">
    <property type="entry name" value="GidB"/>
    <property type="match status" value="1"/>
</dbReference>
<dbReference type="SUPFAM" id="SSF53335">
    <property type="entry name" value="S-adenosyl-L-methionine-dependent methyltransferases"/>
    <property type="match status" value="1"/>
</dbReference>
<comment type="function">
    <text evidence="1">Specifically methylates the N7 position of guanine in position 518 of 16S rRNA.</text>
</comment>
<comment type="subcellular location">
    <subcellularLocation>
        <location evidence="1">Cytoplasm</location>
    </subcellularLocation>
</comment>
<comment type="similarity">
    <text evidence="1">Belongs to the methyltransferase superfamily. RNA methyltransferase RsmG family.</text>
</comment>
<reference key="1">
    <citation type="submission" date="2007-02" db="EMBL/GenBank/DDBJ databases">
        <title>Complete sequence of Mycobacterium sp. JLS.</title>
        <authorList>
            <consortium name="US DOE Joint Genome Institute"/>
            <person name="Copeland A."/>
            <person name="Lucas S."/>
            <person name="Lapidus A."/>
            <person name="Barry K."/>
            <person name="Detter J.C."/>
            <person name="Glavina del Rio T."/>
            <person name="Hammon N."/>
            <person name="Israni S."/>
            <person name="Dalin E."/>
            <person name="Tice H."/>
            <person name="Pitluck S."/>
            <person name="Chain P."/>
            <person name="Malfatti S."/>
            <person name="Shin M."/>
            <person name="Vergez L."/>
            <person name="Schmutz J."/>
            <person name="Larimer F."/>
            <person name="Land M."/>
            <person name="Hauser L."/>
            <person name="Kyrpides N."/>
            <person name="Mikhailova N."/>
            <person name="Miller C.D."/>
            <person name="Anderson A.J."/>
            <person name="Sims R.C."/>
            <person name="Richardson P."/>
        </authorList>
    </citation>
    <scope>NUCLEOTIDE SEQUENCE [LARGE SCALE GENOMIC DNA]</scope>
    <source>
        <strain>JLS</strain>
    </source>
</reference>
<accession>A3Q8S0</accession>
<keyword id="KW-0963">Cytoplasm</keyword>
<keyword id="KW-0489">Methyltransferase</keyword>
<keyword id="KW-0698">rRNA processing</keyword>
<keyword id="KW-0949">S-adenosyl-L-methionine</keyword>
<keyword id="KW-0808">Transferase</keyword>
<protein>
    <recommendedName>
        <fullName evidence="1">Ribosomal RNA small subunit methyltransferase G</fullName>
        <ecNumber evidence="1">2.1.1.-</ecNumber>
    </recommendedName>
    <alternativeName>
        <fullName evidence="1">16S rRNA 7-methylguanosine methyltransferase</fullName>
        <shortName evidence="1">16S rRNA m7G methyltransferase</shortName>
    </alternativeName>
</protein>
<gene>
    <name evidence="1" type="primary">rsmG</name>
    <name type="ordered locus">Mjls_5784</name>
</gene>